<keyword id="KW-0903">Direct protein sequencing</keyword>
<keyword id="KW-1015">Disulfide bond</keyword>
<keyword id="KW-0256">Endoplasmic reticulum</keyword>
<keyword id="KW-0325">Glycoprotein</keyword>
<keyword id="KW-0413">Isomerase</keyword>
<keyword id="KW-0676">Redox-active center</keyword>
<keyword id="KW-0677">Repeat</keyword>
<keyword id="KW-0732">Signal</keyword>
<sequence>MAISKVWISLLLALAVVLSAPAARAEEAAAAEEAAAPEAVLTLHADNFDDAIGQHPFILVEFYAPWCGHCKSLAPEYEKAAQLLSKHDPAIVLAKVDANDEKNKPLAGKYEVQGFPTLKIFRNGGKSIQEYKGPREAEGIVEYLKKQVGPASKEIKAPEDATYLEDGKIHIVGVFTEFSGPEFTNFLEVAEKLRSYYDFGHTVHANHLPRGDAAVERPVVRLFKPFDELVVDSKDFDVSALEKFIDASSTPKVVIFDKNPDNHPYLLKFFQSNAPKAMLFLNFSTGPFESFKSAYYGAVEEFSGKDVKFLIGDIESSQGAFQYFGLKVDQAPLILIQDGDSKKFLKEHVEAGQIVAWLKDYFDGKLTPFRKSEPIPEANNEPVKVVVADNVHDVVFKSGKNVLIEFYAPWCGHCKKLAPILDEAAATLQSEEDVVIAKMDATENDVPGEFDVQGYPTLYFVTPSGKKVSYEGGRTADEIVDYIRKNKETAGQAAAATEKAAEPAATEPLKDEL</sequence>
<evidence type="ECO:0000250" key="1"/>
<evidence type="ECO:0000255" key="2"/>
<evidence type="ECO:0000255" key="3">
    <source>
        <dbReference type="PROSITE-ProRule" id="PRU00691"/>
    </source>
</evidence>
<evidence type="ECO:0000255" key="4">
    <source>
        <dbReference type="PROSITE-ProRule" id="PRU10138"/>
    </source>
</evidence>
<evidence type="ECO:0000256" key="5">
    <source>
        <dbReference type="SAM" id="MobiDB-lite"/>
    </source>
</evidence>
<evidence type="ECO:0000269" key="6">
    <source>
    </source>
</evidence>
<evidence type="ECO:0000305" key="7"/>
<proteinExistence type="evidence at protein level"/>
<protein>
    <recommendedName>
        <fullName>Protein disulfide-isomerase</fullName>
        <shortName>PDI</shortName>
        <ecNumber>5.3.4.1</ecNumber>
    </recommendedName>
    <alternativeName>
        <fullName>Endosperm protein E-1</fullName>
    </alternativeName>
</protein>
<comment type="function">
    <text evidence="1">Participates in the folding of proteins containing disulfide bonds, may be involved in glycosylation, prolyl hydroxylation and triglyceride transfer.</text>
</comment>
<comment type="catalytic activity">
    <reaction>
        <text>Catalyzes the rearrangement of -S-S- bonds in proteins.</text>
        <dbReference type="EC" id="5.3.4.1"/>
    </reaction>
</comment>
<comment type="subcellular location">
    <subcellularLocation>
        <location evidence="4">Endoplasmic reticulum lumen</location>
    </subcellularLocation>
</comment>
<comment type="similarity">
    <text evidence="7">Belongs to the protein disulfide isomerase family.</text>
</comment>
<name>PDI_HORVU</name>
<dbReference type="EC" id="5.3.4.1"/>
<dbReference type="EMBL" id="L33250">
    <property type="protein sequence ID" value="AAA70344.1"/>
    <property type="molecule type" value="mRNA"/>
</dbReference>
<dbReference type="EMBL" id="L33251">
    <property type="protein sequence ID" value="AAA70345.1"/>
    <property type="molecule type" value="mRNA"/>
</dbReference>
<dbReference type="EMBL" id="L33252">
    <property type="protein sequence ID" value="AAA70346.1"/>
    <property type="molecule type" value="mRNA"/>
</dbReference>
<dbReference type="PIR" id="T05974">
    <property type="entry name" value="T05974"/>
</dbReference>
<dbReference type="SMR" id="P80284"/>
<dbReference type="IntAct" id="P80284">
    <property type="interactions" value="1"/>
</dbReference>
<dbReference type="GlyCosmos" id="P80284">
    <property type="glycosylation" value="1 site, No reported glycans"/>
</dbReference>
<dbReference type="ExpressionAtlas" id="P80284">
    <property type="expression patterns" value="baseline and differential"/>
</dbReference>
<dbReference type="GO" id="GO:0005788">
    <property type="term" value="C:endoplasmic reticulum lumen"/>
    <property type="evidence" value="ECO:0007669"/>
    <property type="project" value="UniProtKB-SubCell"/>
</dbReference>
<dbReference type="GO" id="GO:0003756">
    <property type="term" value="F:protein disulfide isomerase activity"/>
    <property type="evidence" value="ECO:0007669"/>
    <property type="project" value="UniProtKB-EC"/>
</dbReference>
<dbReference type="GO" id="GO:0006457">
    <property type="term" value="P:protein folding"/>
    <property type="evidence" value="ECO:0007669"/>
    <property type="project" value="TreeGrafter"/>
</dbReference>
<dbReference type="GO" id="GO:0034976">
    <property type="term" value="P:response to endoplasmic reticulum stress"/>
    <property type="evidence" value="ECO:0007669"/>
    <property type="project" value="TreeGrafter"/>
</dbReference>
<dbReference type="CDD" id="cd02961">
    <property type="entry name" value="PDI_a_family"/>
    <property type="match status" value="1"/>
</dbReference>
<dbReference type="CDD" id="cd02995">
    <property type="entry name" value="PDI_a_PDI_a'_C"/>
    <property type="match status" value="1"/>
</dbReference>
<dbReference type="CDD" id="cd02982">
    <property type="entry name" value="PDI_b'_family"/>
    <property type="match status" value="1"/>
</dbReference>
<dbReference type="CDD" id="cd02981">
    <property type="entry name" value="PDI_b_family"/>
    <property type="match status" value="1"/>
</dbReference>
<dbReference type="FunFam" id="3.40.30.10:FF:000143">
    <property type="entry name" value="Protein disulfide-isomerase"/>
    <property type="match status" value="1"/>
</dbReference>
<dbReference type="FunFam" id="3.40.30.10:FF:000150">
    <property type="entry name" value="Protein disulfide-isomerase"/>
    <property type="match status" value="1"/>
</dbReference>
<dbReference type="FunFam" id="3.40.30.10:FF:000152">
    <property type="entry name" value="Protein disulfide-isomerase"/>
    <property type="match status" value="1"/>
</dbReference>
<dbReference type="FunFam" id="3.40.30.10:FF:000184">
    <property type="entry name" value="Protein disulfide-isomerase"/>
    <property type="match status" value="1"/>
</dbReference>
<dbReference type="Gene3D" id="3.40.30.10">
    <property type="entry name" value="Glutaredoxin"/>
    <property type="match status" value="4"/>
</dbReference>
<dbReference type="InterPro" id="IPR005788">
    <property type="entry name" value="PDI_thioredoxin-like_dom"/>
</dbReference>
<dbReference type="InterPro" id="IPR005792">
    <property type="entry name" value="Prot_disulphide_isomerase"/>
</dbReference>
<dbReference type="InterPro" id="IPR036249">
    <property type="entry name" value="Thioredoxin-like_sf"/>
</dbReference>
<dbReference type="InterPro" id="IPR017937">
    <property type="entry name" value="Thioredoxin_CS"/>
</dbReference>
<dbReference type="InterPro" id="IPR013766">
    <property type="entry name" value="Thioredoxin_domain"/>
</dbReference>
<dbReference type="NCBIfam" id="TIGR01130">
    <property type="entry name" value="ER_PDI_fam"/>
    <property type="match status" value="1"/>
</dbReference>
<dbReference type="NCBIfam" id="TIGR01126">
    <property type="entry name" value="pdi_dom"/>
    <property type="match status" value="2"/>
</dbReference>
<dbReference type="PANTHER" id="PTHR18929">
    <property type="entry name" value="PROTEIN DISULFIDE ISOMERASE"/>
    <property type="match status" value="1"/>
</dbReference>
<dbReference type="PANTHER" id="PTHR18929:SF132">
    <property type="entry name" value="PROTEIN DISULFIDE-ISOMERASE A3"/>
    <property type="match status" value="1"/>
</dbReference>
<dbReference type="Pfam" id="PF00085">
    <property type="entry name" value="Thioredoxin"/>
    <property type="match status" value="2"/>
</dbReference>
<dbReference type="Pfam" id="PF13848">
    <property type="entry name" value="Thioredoxin_6"/>
    <property type="match status" value="1"/>
</dbReference>
<dbReference type="PRINTS" id="PR00421">
    <property type="entry name" value="THIOREDOXIN"/>
</dbReference>
<dbReference type="SUPFAM" id="SSF52833">
    <property type="entry name" value="Thioredoxin-like"/>
    <property type="match status" value="4"/>
</dbReference>
<dbReference type="PROSITE" id="PS00014">
    <property type="entry name" value="ER_TARGET"/>
    <property type="match status" value="1"/>
</dbReference>
<dbReference type="PROSITE" id="PS00194">
    <property type="entry name" value="THIOREDOXIN_1"/>
    <property type="match status" value="2"/>
</dbReference>
<dbReference type="PROSITE" id="PS51352">
    <property type="entry name" value="THIOREDOXIN_2"/>
    <property type="match status" value="2"/>
</dbReference>
<reference key="1">
    <citation type="journal article" date="1994" name="Plant Physiol.">
        <title>Nucleotide sequence and developmental expression of duplicated genes encoding protein disulfide isomerase in barley (Hordeum vulgare L.).</title>
        <authorList>
            <person name="Chen F."/>
            <person name="Hayes P.M."/>
        </authorList>
    </citation>
    <scope>NUCLEOTIDE SEQUENCE [MRNA]</scope>
    <source>
        <strain>cv. Morex</strain>
        <tissue>Ovary</tissue>
    </source>
</reference>
<reference key="2">
    <citation type="journal article" date="1993" name="Electrophoresis">
        <title>Separation of acidic barley endosperm proteins by two-dimensional electrophoresis.</title>
        <authorList>
            <person name="Flengsrud R."/>
        </authorList>
    </citation>
    <scope>PROTEIN SEQUENCE OF 26-42</scope>
    <source>
        <strain>cv. H354-295-2-5</strain>
        <tissue>Starchy endosperm</tissue>
    </source>
</reference>
<accession>P80284</accession>
<gene>
    <name type="primary">PDI</name>
</gene>
<organism>
    <name type="scientific">Hordeum vulgare</name>
    <name type="common">Barley</name>
    <dbReference type="NCBI Taxonomy" id="4513"/>
    <lineage>
        <taxon>Eukaryota</taxon>
        <taxon>Viridiplantae</taxon>
        <taxon>Streptophyta</taxon>
        <taxon>Embryophyta</taxon>
        <taxon>Tracheophyta</taxon>
        <taxon>Spermatophyta</taxon>
        <taxon>Magnoliopsida</taxon>
        <taxon>Liliopsida</taxon>
        <taxon>Poales</taxon>
        <taxon>Poaceae</taxon>
        <taxon>BOP clade</taxon>
        <taxon>Pooideae</taxon>
        <taxon>Triticodae</taxon>
        <taxon>Triticeae</taxon>
        <taxon>Hordeinae</taxon>
        <taxon>Hordeum</taxon>
    </lineage>
</organism>
<feature type="signal peptide" evidence="6">
    <location>
        <begin position="1"/>
        <end position="25"/>
    </location>
</feature>
<feature type="chain" id="PRO_0000034208" description="Protein disulfide-isomerase">
    <location>
        <begin position="26"/>
        <end position="513"/>
    </location>
</feature>
<feature type="domain" description="Thioredoxin 1" evidence="3">
    <location>
        <begin position="26"/>
        <end position="149"/>
    </location>
</feature>
<feature type="domain" description="Thioredoxin 2" evidence="3">
    <location>
        <begin position="369"/>
        <end position="488"/>
    </location>
</feature>
<feature type="region of interest" description="Disordered" evidence="5">
    <location>
        <begin position="491"/>
        <end position="513"/>
    </location>
</feature>
<feature type="short sequence motif" description="Prevents secretion from ER" evidence="4">
    <location>
        <begin position="510"/>
        <end position="513"/>
    </location>
</feature>
<feature type="compositionally biased region" description="Low complexity" evidence="5">
    <location>
        <begin position="491"/>
        <end position="507"/>
    </location>
</feature>
<feature type="active site" description="Nucleophile" evidence="1">
    <location>
        <position position="67"/>
    </location>
</feature>
<feature type="active site" description="Nucleophile" evidence="1">
    <location>
        <position position="70"/>
    </location>
</feature>
<feature type="active site" description="Nucleophile" evidence="1">
    <location>
        <position position="411"/>
    </location>
</feature>
<feature type="active site" description="Nucleophile" evidence="1">
    <location>
        <position position="414"/>
    </location>
</feature>
<feature type="site" description="Contributes to redox potential value" evidence="1">
    <location>
        <position position="68"/>
    </location>
</feature>
<feature type="site" description="Contributes to redox potential value" evidence="1">
    <location>
        <position position="69"/>
    </location>
</feature>
<feature type="site" description="Lowers pKa of C-terminal Cys of first active site" evidence="1">
    <location>
        <position position="135"/>
    </location>
</feature>
<feature type="site" description="Contributes to redox potential value" evidence="1">
    <location>
        <position position="412"/>
    </location>
</feature>
<feature type="site" description="Contributes to redox potential value" evidence="1">
    <location>
        <position position="413"/>
    </location>
</feature>
<feature type="site" description="Lowers pKa of C-terminal Cys of second active site" evidence="1">
    <location>
        <position position="474"/>
    </location>
</feature>
<feature type="glycosylation site" description="N-linked (GlcNAc...) asparagine" evidence="2">
    <location>
        <position position="282"/>
    </location>
</feature>
<feature type="disulfide bond" description="Redox-active" evidence="3">
    <location>
        <begin position="67"/>
        <end position="70"/>
    </location>
</feature>
<feature type="disulfide bond" description="Redox-active" evidence="3">
    <location>
        <begin position="411"/>
        <end position="414"/>
    </location>
</feature>